<evidence type="ECO:0000250" key="1">
    <source>
        <dbReference type="UniProtKB" id="Q6P791"/>
    </source>
</evidence>
<evidence type="ECO:0000250" key="2">
    <source>
        <dbReference type="UniProtKB" id="Q9CQ22"/>
    </source>
</evidence>
<evidence type="ECO:0000256" key="3">
    <source>
        <dbReference type="SAM" id="MobiDB-lite"/>
    </source>
</evidence>
<evidence type="ECO:0000269" key="4">
    <source>
    </source>
</evidence>
<evidence type="ECO:0000269" key="5">
    <source>
    </source>
</evidence>
<evidence type="ECO:0000269" key="6">
    <source>
    </source>
</evidence>
<evidence type="ECO:0000269" key="7">
    <source>
    </source>
</evidence>
<evidence type="ECO:0000269" key="8">
    <source>
    </source>
</evidence>
<evidence type="ECO:0000269" key="9">
    <source>
    </source>
</evidence>
<evidence type="ECO:0000269" key="10">
    <source>
    </source>
</evidence>
<evidence type="ECO:0000269" key="11">
    <source>
    </source>
</evidence>
<evidence type="ECO:0000269" key="12">
    <source>
    </source>
</evidence>
<evidence type="ECO:0000269" key="13">
    <source>
    </source>
</evidence>
<evidence type="ECO:0000269" key="14">
    <source>
    </source>
</evidence>
<evidence type="ECO:0000269" key="15">
    <source>
    </source>
</evidence>
<evidence type="ECO:0000269" key="16">
    <source>
    </source>
</evidence>
<evidence type="ECO:0000269" key="17">
    <source>
    </source>
</evidence>
<evidence type="ECO:0000269" key="18">
    <source>
    </source>
</evidence>
<evidence type="ECO:0000269" key="19">
    <source>
    </source>
</evidence>
<evidence type="ECO:0000269" key="20">
    <source>
    </source>
</evidence>
<evidence type="ECO:0000269" key="21">
    <source>
    </source>
</evidence>
<evidence type="ECO:0000269" key="22">
    <source>
    </source>
</evidence>
<evidence type="ECO:0000269" key="23">
    <source>
    </source>
</evidence>
<evidence type="ECO:0000269" key="24">
    <source>
    </source>
</evidence>
<evidence type="ECO:0000269" key="25">
    <source>
    </source>
</evidence>
<evidence type="ECO:0000269" key="26">
    <source>
    </source>
</evidence>
<evidence type="ECO:0000269" key="27">
    <source>
    </source>
</evidence>
<evidence type="ECO:0000269" key="28">
    <source>
    </source>
</evidence>
<evidence type="ECO:0000269" key="29">
    <source>
    </source>
</evidence>
<evidence type="ECO:0000269" key="30">
    <source>
    </source>
</evidence>
<evidence type="ECO:0000269" key="31">
    <source>
    </source>
</evidence>
<evidence type="ECO:0000303" key="32">
    <source>
    </source>
</evidence>
<evidence type="ECO:0000303" key="33">
    <source>
    </source>
</evidence>
<evidence type="ECO:0000303" key="34">
    <source>
    </source>
</evidence>
<evidence type="ECO:0000303" key="35">
    <source>
    </source>
</evidence>
<evidence type="ECO:0000305" key="36"/>
<evidence type="ECO:0000312" key="37">
    <source>
        <dbReference type="HGNC" id="HGNC:26068"/>
    </source>
</evidence>
<evidence type="ECO:0007744" key="38">
    <source>
        <dbReference type="PDB" id="5X6U"/>
    </source>
</evidence>
<evidence type="ECO:0007744" key="39">
    <source>
        <dbReference type="PDB" id="5X6V"/>
    </source>
</evidence>
<evidence type="ECO:0007744" key="40">
    <source>
        <dbReference type="PDB" id="5Y39"/>
    </source>
</evidence>
<evidence type="ECO:0007744" key="41">
    <source>
        <dbReference type="PDB" id="5Y3A"/>
    </source>
</evidence>
<evidence type="ECO:0007744" key="42">
    <source>
        <dbReference type="PDB" id="5YK3"/>
    </source>
</evidence>
<evidence type="ECO:0007744" key="43">
    <source>
        <dbReference type="PDB" id="6B9X"/>
    </source>
</evidence>
<evidence type="ECO:0007744" key="44">
    <source>
        <dbReference type="PDB" id="6EHP"/>
    </source>
</evidence>
<evidence type="ECO:0007744" key="45">
    <source>
        <dbReference type="PDB" id="6EHR"/>
    </source>
</evidence>
<evidence type="ECO:0007744" key="46">
    <source>
        <dbReference type="PDB" id="6NZD"/>
    </source>
</evidence>
<evidence type="ECO:0007744" key="47">
    <source>
        <dbReference type="PDB" id="6U62"/>
    </source>
</evidence>
<evidence type="ECO:0007744" key="48">
    <source>
        <dbReference type="PDB" id="6ULG"/>
    </source>
</evidence>
<evidence type="ECO:0007744" key="49">
    <source>
        <dbReference type="PDB" id="6WJ2"/>
    </source>
</evidence>
<evidence type="ECO:0007744" key="50">
    <source>
        <dbReference type="PDB" id="6WJ3"/>
    </source>
</evidence>
<evidence type="ECO:0007744" key="51">
    <source>
        <dbReference type="PDB" id="7T3A"/>
    </source>
</evidence>
<evidence type="ECO:0007744" key="52">
    <source>
        <dbReference type="PDB" id="7T3B"/>
    </source>
</evidence>
<evidence type="ECO:0007744" key="53">
    <source>
        <dbReference type="PDB" id="7T3C"/>
    </source>
</evidence>
<evidence type="ECO:0007744" key="54">
    <source>
        <dbReference type="PDB" id="7UX2"/>
    </source>
</evidence>
<evidence type="ECO:0007744" key="55">
    <source>
        <dbReference type="PDB" id="7UXC"/>
    </source>
</evidence>
<evidence type="ECO:0007744" key="56">
    <source>
        <dbReference type="PDB" id="7UXH"/>
    </source>
</evidence>
<evidence type="ECO:0007744" key="57">
    <source>
        <dbReference type="PDB" id="8DHB"/>
    </source>
</evidence>
<evidence type="ECO:0007744" key="58">
    <source>
    </source>
</evidence>
<evidence type="ECO:0007744" key="59">
    <source>
    </source>
</evidence>
<evidence type="ECO:0007829" key="60">
    <source>
        <dbReference type="PDB" id="5X6V"/>
    </source>
</evidence>
<evidence type="ECO:0007829" key="61">
    <source>
        <dbReference type="PDB" id="6B9X"/>
    </source>
</evidence>
<evidence type="ECO:0007829" key="62">
    <source>
        <dbReference type="PDB" id="6EHR"/>
    </source>
</evidence>
<evidence type="ECO:0007829" key="63">
    <source>
        <dbReference type="PDB" id="7UXC"/>
    </source>
</evidence>
<organism>
    <name type="scientific">Homo sapiens</name>
    <name type="common">Human</name>
    <dbReference type="NCBI Taxonomy" id="9606"/>
    <lineage>
        <taxon>Eukaryota</taxon>
        <taxon>Metazoa</taxon>
        <taxon>Chordata</taxon>
        <taxon>Craniata</taxon>
        <taxon>Vertebrata</taxon>
        <taxon>Euteleostomi</taxon>
        <taxon>Mammalia</taxon>
        <taxon>Eutheria</taxon>
        <taxon>Euarchontoglires</taxon>
        <taxon>Primates</taxon>
        <taxon>Haplorrhini</taxon>
        <taxon>Catarrhini</taxon>
        <taxon>Hominidae</taxon>
        <taxon>Homo</taxon>
    </lineage>
</organism>
<reference key="1">
    <citation type="journal article" date="2004" name="Proc. Natl. Acad. Sci. U.S.A.">
        <title>Large-scale cDNA transfection screening for genes related to cancer development and progression.</title>
        <authorList>
            <person name="Wan D."/>
            <person name="Gong Y."/>
            <person name="Qin W."/>
            <person name="Zhang P."/>
            <person name="Li J."/>
            <person name="Wei L."/>
            <person name="Zhou X."/>
            <person name="Li H."/>
            <person name="Qiu X."/>
            <person name="Zhong F."/>
            <person name="He L."/>
            <person name="Yu J."/>
            <person name="Yao G."/>
            <person name="Jiang H."/>
            <person name="Qian L."/>
            <person name="Yu Y."/>
            <person name="Shu H."/>
            <person name="Chen X."/>
            <person name="Xu H."/>
            <person name="Guo M."/>
            <person name="Pan Z."/>
            <person name="Chen Y."/>
            <person name="Ge C."/>
            <person name="Yang S."/>
            <person name="Gu J."/>
        </authorList>
    </citation>
    <scope>NUCLEOTIDE SEQUENCE [LARGE SCALE MRNA]</scope>
</reference>
<reference key="2">
    <citation type="submission" date="2004-06" db="EMBL/GenBank/DDBJ databases">
        <title>Cloning of human full open reading frames in Gateway(TM) system entry vector (pDONR201).</title>
        <authorList>
            <person name="Ebert L."/>
            <person name="Schick M."/>
            <person name="Neubert P."/>
            <person name="Schatten R."/>
            <person name="Henze S."/>
            <person name="Korn B."/>
        </authorList>
    </citation>
    <scope>NUCLEOTIDE SEQUENCE [LARGE SCALE MRNA]</scope>
</reference>
<reference key="3">
    <citation type="journal article" date="2004" name="Nat. Genet.">
        <title>Complete sequencing and characterization of 21,243 full-length human cDNAs.</title>
        <authorList>
            <person name="Ota T."/>
            <person name="Suzuki Y."/>
            <person name="Nishikawa T."/>
            <person name="Otsuki T."/>
            <person name="Sugiyama T."/>
            <person name="Irie R."/>
            <person name="Wakamatsu A."/>
            <person name="Hayashi K."/>
            <person name="Sato H."/>
            <person name="Nagai K."/>
            <person name="Kimura K."/>
            <person name="Makita H."/>
            <person name="Sekine M."/>
            <person name="Obayashi M."/>
            <person name="Nishi T."/>
            <person name="Shibahara T."/>
            <person name="Tanaka T."/>
            <person name="Ishii S."/>
            <person name="Yamamoto J."/>
            <person name="Saito K."/>
            <person name="Kawai Y."/>
            <person name="Isono Y."/>
            <person name="Nakamura Y."/>
            <person name="Nagahari K."/>
            <person name="Murakami K."/>
            <person name="Yasuda T."/>
            <person name="Iwayanagi T."/>
            <person name="Wagatsuma M."/>
            <person name="Shiratori A."/>
            <person name="Sudo H."/>
            <person name="Hosoiri T."/>
            <person name="Kaku Y."/>
            <person name="Kodaira H."/>
            <person name="Kondo H."/>
            <person name="Sugawara M."/>
            <person name="Takahashi M."/>
            <person name="Kanda K."/>
            <person name="Yokoi T."/>
            <person name="Furuya T."/>
            <person name="Kikkawa E."/>
            <person name="Omura Y."/>
            <person name="Abe K."/>
            <person name="Kamihara K."/>
            <person name="Katsuta N."/>
            <person name="Sato K."/>
            <person name="Tanikawa M."/>
            <person name="Yamazaki M."/>
            <person name="Ninomiya K."/>
            <person name="Ishibashi T."/>
            <person name="Yamashita H."/>
            <person name="Murakawa K."/>
            <person name="Fujimori K."/>
            <person name="Tanai H."/>
            <person name="Kimata M."/>
            <person name="Watanabe M."/>
            <person name="Hiraoka S."/>
            <person name="Chiba Y."/>
            <person name="Ishida S."/>
            <person name="Ono Y."/>
            <person name="Takiguchi S."/>
            <person name="Watanabe S."/>
            <person name="Yosida M."/>
            <person name="Hotuta T."/>
            <person name="Kusano J."/>
            <person name="Kanehori K."/>
            <person name="Takahashi-Fujii A."/>
            <person name="Hara H."/>
            <person name="Tanase T.-O."/>
            <person name="Nomura Y."/>
            <person name="Togiya S."/>
            <person name="Komai F."/>
            <person name="Hara R."/>
            <person name="Takeuchi K."/>
            <person name="Arita M."/>
            <person name="Imose N."/>
            <person name="Musashino K."/>
            <person name="Yuuki H."/>
            <person name="Oshima A."/>
            <person name="Sasaki N."/>
            <person name="Aotsuka S."/>
            <person name="Yoshikawa Y."/>
            <person name="Matsunawa H."/>
            <person name="Ichihara T."/>
            <person name="Shiohata N."/>
            <person name="Sano S."/>
            <person name="Moriya S."/>
            <person name="Momiyama H."/>
            <person name="Satoh N."/>
            <person name="Takami S."/>
            <person name="Terashima Y."/>
            <person name="Suzuki O."/>
            <person name="Nakagawa S."/>
            <person name="Senoh A."/>
            <person name="Mizoguchi H."/>
            <person name="Goto Y."/>
            <person name="Shimizu F."/>
            <person name="Wakebe H."/>
            <person name="Hishigaki H."/>
            <person name="Watanabe T."/>
            <person name="Sugiyama A."/>
            <person name="Takemoto M."/>
            <person name="Kawakami B."/>
            <person name="Yamazaki M."/>
            <person name="Watanabe K."/>
            <person name="Kumagai A."/>
            <person name="Itakura S."/>
            <person name="Fukuzumi Y."/>
            <person name="Fujimori Y."/>
            <person name="Komiyama M."/>
            <person name="Tashiro H."/>
            <person name="Tanigami A."/>
            <person name="Fujiwara T."/>
            <person name="Ono T."/>
            <person name="Yamada K."/>
            <person name="Fujii Y."/>
            <person name="Ozaki K."/>
            <person name="Hirao M."/>
            <person name="Ohmori Y."/>
            <person name="Kawabata A."/>
            <person name="Hikiji T."/>
            <person name="Kobatake N."/>
            <person name="Inagaki H."/>
            <person name="Ikema Y."/>
            <person name="Okamoto S."/>
            <person name="Okitani R."/>
            <person name="Kawakami T."/>
            <person name="Noguchi S."/>
            <person name="Itoh T."/>
            <person name="Shigeta K."/>
            <person name="Senba T."/>
            <person name="Matsumura K."/>
            <person name="Nakajima Y."/>
            <person name="Mizuno T."/>
            <person name="Morinaga M."/>
            <person name="Sasaki M."/>
            <person name="Togashi T."/>
            <person name="Oyama M."/>
            <person name="Hata H."/>
            <person name="Watanabe M."/>
            <person name="Komatsu T."/>
            <person name="Mizushima-Sugano J."/>
            <person name="Satoh T."/>
            <person name="Shirai Y."/>
            <person name="Takahashi Y."/>
            <person name="Nakagawa K."/>
            <person name="Okumura K."/>
            <person name="Nagase T."/>
            <person name="Nomura N."/>
            <person name="Kikuchi H."/>
            <person name="Masuho Y."/>
            <person name="Yamashita R."/>
            <person name="Nakai K."/>
            <person name="Yada T."/>
            <person name="Nakamura Y."/>
            <person name="Ohara O."/>
            <person name="Isogai T."/>
            <person name="Sugano S."/>
        </authorList>
    </citation>
    <scope>NUCLEOTIDE SEQUENCE [LARGE SCALE MRNA]</scope>
</reference>
<reference key="4">
    <citation type="journal article" date="2004" name="Genome Res.">
        <title>The status, quality, and expansion of the NIH full-length cDNA project: the Mammalian Gene Collection (MGC).</title>
        <authorList>
            <consortium name="The MGC Project Team"/>
        </authorList>
    </citation>
    <scope>NUCLEOTIDE SEQUENCE [LARGE SCALE MRNA]</scope>
    <source>
        <tissue>Skin</tissue>
    </source>
</reference>
<reference key="5">
    <citation type="submission" date="2005-06" db="UniProtKB">
        <authorList>
            <person name="Bienvenut W.V."/>
        </authorList>
    </citation>
    <scope>PROTEIN SEQUENCE OF 48-60 AND 135-147</scope>
    <scope>IDENTIFICATION BY MASS SPECTROMETRY</scope>
    <source>
        <tissue>B-cell lymphoma</tissue>
    </source>
</reference>
<reference key="6">
    <citation type="journal article" date="2006" name="Nat. Biotechnol.">
        <title>A probability-based approach for high-throughput protein phosphorylation analysis and site localization.</title>
        <authorList>
            <person name="Beausoleil S.A."/>
            <person name="Villen J."/>
            <person name="Gerber S.A."/>
            <person name="Rush J."/>
            <person name="Gygi S.P."/>
        </authorList>
    </citation>
    <scope>IDENTIFICATION BY MASS SPECTROMETRY [LARGE SCALE ANALYSIS]</scope>
    <source>
        <tissue>Cervix carcinoma</tissue>
    </source>
</reference>
<reference key="7">
    <citation type="journal article" date="2008" name="Proc. Natl. Acad. Sci. U.S.A.">
        <title>A quantitative atlas of mitotic phosphorylation.</title>
        <authorList>
            <person name="Dephoure N."/>
            <person name="Zhou C."/>
            <person name="Villen J."/>
            <person name="Beausoleil S.A."/>
            <person name="Bakalarski C.E."/>
            <person name="Elledge S.J."/>
            <person name="Gygi S.P."/>
        </authorList>
    </citation>
    <scope>IDENTIFICATION BY MASS SPECTROMETRY [LARGE SCALE ANALYSIS]</scope>
    <source>
        <tissue>Cervix carcinoma</tissue>
    </source>
</reference>
<reference key="8">
    <citation type="journal article" date="2009" name="Anal. Chem.">
        <title>Lys-N and trypsin cover complementary parts of the phosphoproteome in a refined SCX-based approach.</title>
        <authorList>
            <person name="Gauci S."/>
            <person name="Helbig A.O."/>
            <person name="Slijper M."/>
            <person name="Krijgsveld J."/>
            <person name="Heck A.J."/>
            <person name="Mohammed S."/>
        </authorList>
    </citation>
    <scope>IDENTIFICATION BY MASS SPECTROMETRY [LARGE SCALE ANALYSIS]</scope>
</reference>
<reference key="9">
    <citation type="journal article" date="2009" name="J. Biol. Chem.">
        <title>A novel protein associated with membrane-type 1 matrix metalloproteinase binds p27(kip1) and regulates RhoA activation, actin remodeling, and matrigel invasion.</title>
        <authorList>
            <person name="Hoshino D."/>
            <person name="Tomari T."/>
            <person name="Nagano M."/>
            <person name="Koshikawa N."/>
            <person name="Seiki M."/>
        </authorList>
    </citation>
    <scope>FUNCTION</scope>
    <scope>INTERACTION WITH MMP14 AND CDKN1B</scope>
</reference>
<reference key="10">
    <citation type="journal article" date="2009" name="Sci. Signal.">
        <title>Quantitative phosphoproteomic analysis of T cell receptor signaling reveals system-wide modulation of protein-protein interactions.</title>
        <authorList>
            <person name="Mayya V."/>
            <person name="Lundgren D.H."/>
            <person name="Hwang S.-I."/>
            <person name="Rezaul K."/>
            <person name="Wu L."/>
            <person name="Eng J.K."/>
            <person name="Rodionov V."/>
            <person name="Han D.K."/>
        </authorList>
    </citation>
    <scope>IDENTIFICATION BY MASS SPECTROMETRY [LARGE SCALE ANALYSIS]</scope>
    <source>
        <tissue>Leukemic T-cell</tissue>
    </source>
</reference>
<reference key="11">
    <citation type="journal article" date="2010" name="Cell">
        <title>Ragulator-Rag complex targets mTORC1 to the lysosomal surface and is necessary for its activation by amino acids.</title>
        <authorList>
            <person name="Sancak Y."/>
            <person name="Bar-Peled L."/>
            <person name="Zoncu R."/>
            <person name="Markhard A.L."/>
            <person name="Nada S."/>
            <person name="Sabatini D.M."/>
        </authorList>
    </citation>
    <scope>FUNCTION</scope>
    <scope>IDENTIFICATION IN RAGULATOR COMPLEX</scope>
    <scope>INTERACTION WITH RRAGB AND RRAGD</scope>
</reference>
<reference key="12">
    <citation type="journal article" date="2010" name="PLoS ONE">
        <title>Pdro, a protein associated with late endosomes and lysosomes and implicated in cellular cholesterol homeostasis.</title>
        <authorList>
            <person name="Guillaumot P."/>
            <person name="Luquain C."/>
            <person name="Malek M."/>
            <person name="Huber A.L."/>
            <person name="Brugiere S."/>
            <person name="Garin J."/>
            <person name="Grunwald D."/>
            <person name="Regnier D."/>
            <person name="Petrilli V."/>
            <person name="Lefai E."/>
            <person name="Manie S.N."/>
        </authorList>
    </citation>
    <scope>FUNCTION</scope>
    <scope>SUBCELLULAR LOCATION</scope>
    <scope>INDUCTION BY CHOLESTEROL</scope>
</reference>
<reference key="13">
    <citation type="journal article" date="2010" name="Sci. Signal.">
        <title>Quantitative phosphoproteomics reveals widespread full phosphorylation site occupancy during mitosis.</title>
        <authorList>
            <person name="Olsen J.V."/>
            <person name="Vermeulen M."/>
            <person name="Santamaria A."/>
            <person name="Kumar C."/>
            <person name="Miller M.L."/>
            <person name="Jensen L.J."/>
            <person name="Gnad F."/>
            <person name="Cox J."/>
            <person name="Jensen T.S."/>
            <person name="Nigg E.A."/>
            <person name="Brunak S."/>
            <person name="Mann M."/>
        </authorList>
    </citation>
    <scope>PHOSPHORYLATION [LARGE SCALE ANALYSIS] AT SER-27</scope>
    <scope>IDENTIFICATION BY MASS SPECTROMETRY [LARGE SCALE ANALYSIS]</scope>
    <source>
        <tissue>Cervix carcinoma</tissue>
    </source>
</reference>
<reference key="14">
    <citation type="journal article" date="2011" name="BMC Syst. Biol.">
        <title>Initial characterization of the human central proteome.</title>
        <authorList>
            <person name="Burkard T.R."/>
            <person name="Planyavsky M."/>
            <person name="Kaupe I."/>
            <person name="Breitwieser F.P."/>
            <person name="Buerckstuemmer T."/>
            <person name="Bennett K.L."/>
            <person name="Superti-Furga G."/>
            <person name="Colinge J."/>
        </authorList>
    </citation>
    <scope>IDENTIFICATION BY MASS SPECTROMETRY [LARGE SCALE ANALYSIS]</scope>
</reference>
<reference key="15">
    <citation type="journal article" date="2012" name="Cell">
        <title>Ragulator is a GEF for the Rag GTPases that signal amino acid levels to mTORC1.</title>
        <authorList>
            <person name="Bar-Peled L."/>
            <person name="Schweitzer L.D."/>
            <person name="Zoncu R."/>
            <person name="Sabatini D.M."/>
        </authorList>
    </citation>
    <scope>FUNCTION IN MTORC1 SIGNALING</scope>
    <scope>IDENTIFICATION IN RAGULATOR COMPLEX</scope>
    <scope>INTERACTION WITH MTORC1 COMPLEX AND RAG GTPASES</scope>
</reference>
<reference key="16">
    <citation type="journal article" date="2013" name="J. Proteome Res.">
        <title>Toward a comprehensive characterization of a human cancer cell phosphoproteome.</title>
        <authorList>
            <person name="Zhou H."/>
            <person name="Di Palma S."/>
            <person name="Preisinger C."/>
            <person name="Peng M."/>
            <person name="Polat A.N."/>
            <person name="Heck A.J."/>
            <person name="Mohammed S."/>
        </authorList>
    </citation>
    <scope>PHOSPHORYLATION [LARGE SCALE ANALYSIS] AT SER-27; SER-42; SER-56; SER-98 AND SER-141</scope>
    <scope>IDENTIFICATION BY MASS SPECTROMETRY [LARGE SCALE ANALYSIS]</scope>
    <source>
        <tissue>Cervix carcinoma</tissue>
        <tissue>Erythroleukemia</tissue>
    </source>
</reference>
<reference key="17">
    <citation type="journal article" date="2014" name="J. Proteomics">
        <title>An enzyme assisted RP-RPLC approach for in-depth analysis of human liver phosphoproteome.</title>
        <authorList>
            <person name="Bian Y."/>
            <person name="Song C."/>
            <person name="Cheng K."/>
            <person name="Dong M."/>
            <person name="Wang F."/>
            <person name="Huang J."/>
            <person name="Sun D."/>
            <person name="Wang L."/>
            <person name="Ye M."/>
            <person name="Zou H."/>
        </authorList>
    </citation>
    <scope>IDENTIFICATION BY MASS SPECTROMETRY [LARGE SCALE ANALYSIS]</scope>
    <source>
        <tissue>Liver</tissue>
    </source>
</reference>
<reference key="18">
    <citation type="journal article" date="2014" name="Nat. Commun.">
        <title>Global profiling of co- and post-translationally N-myristoylated proteomes in human cells.</title>
        <authorList>
            <person name="Thinon E."/>
            <person name="Serwa R.A."/>
            <person name="Broncel M."/>
            <person name="Brannigan J.A."/>
            <person name="Brassat U."/>
            <person name="Wright M.H."/>
            <person name="Heal W.P."/>
            <person name="Wilkinson A.J."/>
            <person name="Mann D.J."/>
            <person name="Tate E.W."/>
        </authorList>
    </citation>
    <scope>MYRISTOYLATION AT GLY-2</scope>
    <scope>CLEAVAGE OF INITIATOR METHIONINE</scope>
    <scope>IDENTIFICATION BY MASS SPECTROMETRY</scope>
</reference>
<reference key="19">
    <citation type="journal article" date="2015" name="Angew. Chem. Int. Ed.">
        <title>Multifunctional reagents for quantitative proteome-wide analysis of protein modification in human cells and dynamic profiling of protein lipidation during vertebrate development.</title>
        <authorList>
            <person name="Broncel M."/>
            <person name="Serwa R.A."/>
            <person name="Ciepla P."/>
            <person name="Krause E."/>
            <person name="Dallman M.J."/>
            <person name="Magee A.I."/>
            <person name="Tate E.W."/>
        </authorList>
    </citation>
    <scope>MYRISTOYLATION AT GLY-2</scope>
    <scope>CLEAVAGE OF INITIATOR METHIONINE</scope>
    <scope>IDENTIFICATION BY MASS SPECTROMETRY</scope>
</reference>
<reference key="20">
    <citation type="journal article" date="2015" name="Nature">
        <title>SLC38A9 is a component of the lysosomal amino acid sensing machinery that controls mTORC1.</title>
        <authorList>
            <person name="Rebsamen M."/>
            <person name="Pochini L."/>
            <person name="Stasyk T."/>
            <person name="de Araujo M.E."/>
            <person name="Galluccio M."/>
            <person name="Kandasamy R.K."/>
            <person name="Snijder B."/>
            <person name="Fauster A."/>
            <person name="Rudashevskaya E.L."/>
            <person name="Bruckner M."/>
            <person name="Scorzoni S."/>
            <person name="Filipek P.A."/>
            <person name="Huber K.V."/>
            <person name="Bigenzahn J.W."/>
            <person name="Heinz L.X."/>
            <person name="Kraft C."/>
            <person name="Bennett K.L."/>
            <person name="Indiveri C."/>
            <person name="Huber L.A."/>
            <person name="Superti-Furga G."/>
        </authorList>
    </citation>
    <scope>INTERACTION WITH SLC38A9</scope>
</reference>
<reference key="21">
    <citation type="journal article" date="2015" name="Proteomics">
        <title>N-terminome analysis of the human mitochondrial proteome.</title>
        <authorList>
            <person name="Vaca Jacome A.S."/>
            <person name="Rabilloud T."/>
            <person name="Schaeffer-Reiss C."/>
            <person name="Rompais M."/>
            <person name="Ayoub D."/>
            <person name="Lane L."/>
            <person name="Bairoch A."/>
            <person name="Van Dorsselaer A."/>
            <person name="Carapito C."/>
        </authorList>
    </citation>
    <scope>IDENTIFICATION BY MASS SPECTROMETRY [LARGE SCALE ANALYSIS]</scope>
</reference>
<reference key="22">
    <citation type="journal article" date="2015" name="Science">
        <title>Metabolism. Lysosomal amino acid transporter SLC38A9 signals arginine sufficiency to mTORC1.</title>
        <authorList>
            <person name="Wang S."/>
            <person name="Tsun Z.Y."/>
            <person name="Wolfson R.L."/>
            <person name="Shen K."/>
            <person name="Wyant G.A."/>
            <person name="Plovanich M.E."/>
            <person name="Yuan E.D."/>
            <person name="Jones T.D."/>
            <person name="Chantranupong L."/>
            <person name="Comb W."/>
            <person name="Wang T."/>
            <person name="Bar-Peled L."/>
            <person name="Zoncu R."/>
            <person name="Straub C."/>
            <person name="Kim C."/>
            <person name="Park J."/>
            <person name="Sabatini B.L."/>
            <person name="Sabatini D.M."/>
        </authorList>
    </citation>
    <scope>INTERACTION WITH SLC38A9</scope>
</reference>
<reference key="23">
    <citation type="journal article" date="2018" name="Genes Cells">
        <title>TMEM55B contributes to lysosomal homeostasis and amino acid-induced mTORC1 activation.</title>
        <authorList>
            <person name="Hashimoto Y."/>
            <person name="Shirane M."/>
            <person name="Nakayama K.I."/>
        </authorList>
    </citation>
    <scope>INTERACTION WITH PIP4P1</scope>
</reference>
<reference key="24">
    <citation type="journal article" date="2018" name="Elife">
        <title>UBE3A-mediated p18/LAMTOR1 ubiquitination and degradation regulate mTORC1 activity and synaptic plasticity.</title>
        <authorList>
            <person name="Sun J."/>
            <person name="Liu Y."/>
            <person name="Jia Y."/>
            <person name="Hao X."/>
            <person name="Lin W.J."/>
            <person name="Tran J."/>
            <person name="Lynch G."/>
            <person name="Baudry M."/>
            <person name="Bi X."/>
        </authorList>
    </citation>
    <scope>UBIQUITINATION</scope>
</reference>
<reference key="25">
    <citation type="journal article" date="2018" name="Proc. Natl. Acad. Sci. U.S.A.">
        <title>Ragulator and SLC38A9 activate the Rag GTPases through noncanonical GEF mechanisms.</title>
        <authorList>
            <person name="Shen K."/>
            <person name="Sabatini D.M."/>
        </authorList>
    </citation>
    <scope>FUNCTION</scope>
</reference>
<reference key="26">
    <citation type="journal article" date="2019" name="Front. Cell. Neurosci.">
        <title>mTORC1 signaling is palmitoylation-dependent in hippocampal neurons and non-neuronal cells and involves dynamic palmitoylation of LAMTOR1 and mTOR.</title>
        <authorList>
            <person name="Sanders S.S."/>
            <person name="De Simone F.I."/>
            <person name="Thomas G.M."/>
        </authorList>
    </citation>
    <scope>FUNCTION</scope>
    <scope>SUBCELLULAR LOCATION</scope>
    <scope>PALMITOYLATION AT CYS-3 AND CYS-4</scope>
    <scope>MUTAGENESIS OF 3-CYS-CYS-4</scope>
</reference>
<reference key="27">
    <citation type="journal article" date="2020" name="Sci. Rep.">
        <title>N-myristoyltransferase-1 is necessary for lysosomal degradation and mTORC1 activation in cancer cells.</title>
        <authorList>
            <person name="Chen Y.C."/>
            <person name="Navarrete M.S."/>
            <person name="Wang Y."/>
            <person name="McClintock N.C."/>
            <person name="Sakurai R."/>
            <person name="Wang F."/>
            <person name="Chen K.T."/>
            <person name="Chou T.F."/>
            <person name="Rehan V.K."/>
            <person name="Lee D.J."/>
            <person name="Diaz B."/>
        </authorList>
    </citation>
    <scope>FUNCTION</scope>
    <scope>SUBCELLULAR LOCATION</scope>
    <scope>MYRISTOYLATION AT GLY-2</scope>
</reference>
<reference key="28">
    <citation type="journal article" date="2022" name="Cancer Lett.">
        <title>N-myristoyltransferase-1 deficiency blocks myristoylation of LAMTOR1 and inhibits bladder cancer progression.</title>
        <authorList>
            <person name="Sun Y."/>
            <person name="Guan Z."/>
            <person name="Sheng Q."/>
            <person name="Duan W."/>
            <person name="Zhao H."/>
            <person name="Zhou J."/>
            <person name="Deng Q."/>
            <person name="Pei X."/>
        </authorList>
    </citation>
    <scope>MYRISTOYLATION AT GLY-2</scope>
    <scope>PALMITOYLATION AT CYS-3 AND CYS-4</scope>
    <scope>MUTAGENESIS OF GLY-2; CYS-3 AND CYS-4</scope>
</reference>
<reference key="29">
    <citation type="journal article" date="2022" name="Cell Rep.">
        <title>USP32-regulated LAMTOR1 ubiquitination impacts mTORC1 activation and autophagy induction.</title>
        <authorList>
            <person name="Hertel A."/>
            <person name="Alves L.M."/>
            <person name="Dutz H."/>
            <person name="Tascher G."/>
            <person name="Bonn F."/>
            <person name="Kaulich M."/>
            <person name="Dikic I."/>
            <person name="Eimer S."/>
            <person name="Steinberg F."/>
            <person name="Bremm A."/>
        </authorList>
    </citation>
    <scope>FUNCTION</scope>
    <scope>UBIQUITINATION AT LYS-20; LYS-31 AND LYS-60</scope>
    <scope>DEUBIQUITINATION BY USP32</scope>
    <scope>INTERACTION WITH LYSOSOMAL V-ATPASE</scope>
</reference>
<reference key="30">
    <citation type="journal article" date="2022" name="Polymers (Basel)">
        <title>Structural exploration on palmitoyltransferase DHHC3 from Homo sapiens.</title>
        <authorList>
            <person name="Tang M."/>
            <person name="Xia Y."/>
            <person name="Xiao T."/>
            <person name="Cao R."/>
            <person name="Cao Y."/>
            <person name="Ouyang B."/>
        </authorList>
    </citation>
    <scope>PALMITOYLATION AT CYS-3 AND CYS-4</scope>
    <scope>MUTAGENESIS OF 3-CYS-CYS-4; CYS-3 AND CYS-4</scope>
</reference>
<reference evidence="42" key="31">
    <citation type="journal article" date="2017" name="Cell Discov.">
        <title>Structural insight into the Ragulator complex which anchors mTORC1 to the lysosomal membrane.</title>
        <authorList>
            <person name="Mu Z."/>
            <person name="Wang L."/>
            <person name="Deng W."/>
            <person name="Wang J."/>
            <person name="Wu G."/>
        </authorList>
    </citation>
    <scope>X-RAY CRYSTALLOGRAPHY (2.03 ANGSTROMS) OF 77-160 IN COMPLEX WITH LAMTOR2; LAMTOR3; LAMTOR4 AND LAMTOR5</scope>
    <scope>FUNCTION</scope>
    <scope>IDENTIFICATION IN RAGULATOR COMPLEX</scope>
    <scope>MUTAGENESIS OF 154-LEU--PHE-158</scope>
</reference>
<reference evidence="43" key="32">
    <citation type="journal article" date="2017" name="Mol. Cell">
        <title>Hybrid Structure of the RagA/C-Ragulator mTORC1 Activation Complex.</title>
        <authorList>
            <person name="Su M.Y."/>
            <person name="Morris K.L."/>
            <person name="Kim D.J."/>
            <person name="Fu Y."/>
            <person name="Lawrence R."/>
            <person name="Stjepanovic G."/>
            <person name="Zoncu R."/>
            <person name="Hurley J.H."/>
        </authorList>
    </citation>
    <scope>X-RAY CRYSTALLOGRAPHY (1.42 ANGSTROMS) IN COMPLEX WITH LAMTOR2; LAMTOR3; LAMTOR4 AND LAMTOR5</scope>
    <scope>FUNCTION</scope>
    <scope>IDENTIFICATION IN RAGULATOR COMPLEX</scope>
</reference>
<reference evidence="40 41" key="33">
    <citation type="journal article" date="2017" name="Nat. Commun.">
        <title>Structural basis for Ragulator functioning as a scaffold in membrane-anchoring of Rag GTPases and mTORC1.</title>
        <authorList>
            <person name="Zhang T."/>
            <person name="Wang R."/>
            <person name="Wang Z."/>
            <person name="Wang X."/>
            <person name="Wang F."/>
            <person name="Ding J."/>
        </authorList>
    </citation>
    <scope>X-RAY CRYSTALLOGRAPHY (2.65 ANGSTROMS) OF 50-161 IN COMPLEX WITH LAMTOR2; LAMTOR3; LAMTOR4 AND LAMTOR5</scope>
    <scope>FUNCTION</scope>
    <scope>IDENTIFICATION IN RAGULATOR COMPLEX</scope>
    <scope>MUTAGENESIS OF LEU-119 AND VAL-132</scope>
</reference>
<reference evidence="38 39" key="34">
    <citation type="journal article" date="2017" name="Nat. Commun.">
        <title>Structural basis for the assembly of the Ragulator-Rag GTPase complex.</title>
        <authorList>
            <person name="Yonehara R."/>
            <person name="Nada S."/>
            <person name="Nakai T."/>
            <person name="Nakai M."/>
            <person name="Kitamura A."/>
            <person name="Ogawa A."/>
            <person name="Nakatsumi H."/>
            <person name="Nakayama K.I."/>
            <person name="Li S."/>
            <person name="Standley D.M."/>
            <person name="Yamashita E."/>
            <person name="Nakagawa A."/>
            <person name="Okada M."/>
        </authorList>
    </citation>
    <scope>X-RAY CRYSTALLOGRAPHY (2.02 ANGSTROMS) IN COMPLEX WITH RRAGA; RRAGC; LAMTOR2; LAMTOR3; LAMTOR4 AND LAMTOR5</scope>
    <scope>FUNCTION</scope>
    <scope>SUBCELLULAR LOCATION</scope>
    <scope>IDENTIFICATION IN RAGULATOR COMPLEX</scope>
</reference>
<reference evidence="44 45" key="35">
    <citation type="journal article" date="2017" name="Science">
        <title>Crystal structure of the human lysosomal mTORC1 scaffold complex and its impact on signaling.</title>
        <authorList>
            <person name="de Araujo M.E.G."/>
            <person name="Naschberger A."/>
            <person name="Fuernrohr B.G."/>
            <person name="Stasyk T."/>
            <person name="Dunzendorfer-Matt T."/>
            <person name="Lechner S."/>
            <person name="Welti S."/>
            <person name="Kremser L."/>
            <person name="Shivalingaiah G."/>
            <person name="Offterdinger M."/>
            <person name="Lindner H.H."/>
            <person name="Huber L.A."/>
            <person name="Scheffzek K."/>
        </authorList>
    </citation>
    <scope>X-RAY CRYSTALLOGRAPHY (2.90 ANGSTROMS) OF 183-313 IN COMPLEX WITH RRAGA; RRAGC; LAMTOR2; LAMTOR3; LAMTOR4 AND LAMTOR5</scope>
    <scope>FUNCTION</scope>
    <scope>IDENTIFICATION IN RAGULATOR COMPLEX</scope>
    <scope>MUTAGENESIS OF 148-VAL-ASP-149; 151-LYS--GLU-153 AND 154-LEU--VAL-156</scope>
</reference>
<reference evidence="48" key="36">
    <citation type="journal article" date="2019" name="Cell">
        <title>Cryo-EM structure of the human FLCN-FNIP2-Rag-Ragulator complex.</title>
        <authorList>
            <person name="Shen K."/>
            <person name="Rogala K.B."/>
            <person name="Chou H.T."/>
            <person name="Huang R.K."/>
            <person name="Yu Z."/>
            <person name="Sabatini D.M."/>
        </authorList>
    </citation>
    <scope>STRUCTURE BY ELECTRON MICROSCOPY (3.31 ANGSTROMS) IN COMPLEX WITH FLCN; FNIP2; RRAGA; RRAGC; LAMTOR2; LAMTOR3; LAMTOR4 AND LAMTOR5</scope>
    <scope>IDENTIFICATION IN THE LFC COMPLEX</scope>
</reference>
<reference evidence="47" key="37">
    <citation type="journal article" date="2019" name="Science">
        <title>Structural basis for the docking of mTORC1 on the lysosomal surface.</title>
        <authorList>
            <person name="Rogala K.B."/>
            <person name="Gu X."/>
            <person name="Kedir J.F."/>
            <person name="Abu-Remaileh M."/>
            <person name="Bianchi L.F."/>
            <person name="Bottino A.M.S."/>
            <person name="Dueholm R."/>
            <person name="Niehaus A."/>
            <person name="Overwijn D."/>
            <person name="Fils A.P."/>
            <person name="Zhou S.X."/>
            <person name="Leary D."/>
            <person name="Laqtom N.N."/>
            <person name="Brignole E.J."/>
            <person name="Sabatini D.M."/>
        </authorList>
    </citation>
    <scope>STRUCTURE BY ELECTRON MICROSCOPY (3.18 ANGSTROMS) IN COMPLEX WITH RRAGA; RRAGC; RPTOR; LAMTOR2; LAMTOR3; LAMTOR4 AND LAMTOR5</scope>
    <scope>IDENTIFICATION IN THE RAGULATOR COMPLEX</scope>
</reference>
<reference evidence="46" key="38">
    <citation type="journal article" date="2019" name="Science">
        <title>Structural mechanism of a Rag GTPase activation checkpoint by the lysosomal folliculin complex.</title>
        <authorList>
            <person name="Lawrence R.E."/>
            <person name="Fromm S.A."/>
            <person name="Fu Y."/>
            <person name="Yokom A.L."/>
            <person name="Kim D.J."/>
            <person name="Thelen A.M."/>
            <person name="Young L.N."/>
            <person name="Lim C.Y."/>
            <person name="Samelson A.J."/>
            <person name="Hurley J.H."/>
            <person name="Zoncu R."/>
        </authorList>
    </citation>
    <scope>STRUCTURE BY ELECTRON MICROSCOPY (3.60 ANGSTROMS) OF 5-161 IN COMPLEX WITH FLCN; FNIP2; RRAGA; RRAGC; LAMTOR2; LAMTOR3; LAMTOR4 AND LAMTOR5</scope>
    <scope>IDENTIFICATION IN THE LFC COMPLEX</scope>
</reference>
<reference evidence="49 50" key="39">
    <citation type="journal article" date="2020" name="Nat. Struct. Mol. Biol.">
        <title>Structural mechanism for amino acid-dependent Rag GTPase nucleotide state switching by SLC38A9.</title>
        <authorList>
            <person name="Fromm S.A."/>
            <person name="Lawrence R.E."/>
            <person name="Hurley J.H."/>
        </authorList>
    </citation>
    <scope>STRUCTURE BY ELECTRON MICROSCOPY (3.20 ANGSTROMS)IN COMPLEX WITH SLC38A9; LAMTOR2; LAMTOR3; LAMTOR4; LAMTOR5 AND THE RAG GTPASES HETERODIMER (RRAGA AND RRAGC)</scope>
    <scope>SUBUNIT</scope>
</reference>
<reference evidence="51 52 53" key="40">
    <citation type="journal article" date="2022" name="Mol. Cell">
        <title>Cryo-EM structures of the human GATOR1-Rag-Ragulator complex reveal a spatial-constraint regulated GAP mechanism.</title>
        <authorList>
            <person name="Egri S.B."/>
            <person name="Ouch C."/>
            <person name="Chou H.T."/>
            <person name="Yu Z."/>
            <person name="Song K."/>
            <person name="Xu C."/>
            <person name="Shen K."/>
        </authorList>
    </citation>
    <scope>STRUCTURE BY ELECTRON MICROSCOPY (3.90 ANGSTROMS) IN COMPLEX WITH RRAGA; RRAGC; DEPDC5; NPRL2; NPRL3; LAMTOR2; LAMTOR3; LAMTOR4 AND LAMTOR5</scope>
    <scope>IDENTIFICATION IN THE RAGULATOR COMPLEX</scope>
</reference>
<reference evidence="57" key="41">
    <citation type="journal article" date="2022" name="Sci. Adv.">
        <title>Structural basis for FLCN RagC GAP activation in MiT-TFE substrate-selective mTORC1 regulation.</title>
        <authorList>
            <person name="Jansen R.M."/>
            <person name="Peruzzo R."/>
            <person name="Fromm S.A."/>
            <person name="Yokom A.L."/>
            <person name="Zoncu R."/>
            <person name="Hurley J.H."/>
        </authorList>
    </citation>
    <scope>STRUCTURE BY ELECTRON MICROSCOPY (3.53 ANGSTROMS) IN COMPLEX WITH RRAGA; RRAGC; LAMTOR2; LAMTOR3; LAMTOR4; LAMTOR5; FNIP2; FLCN AND SLC38A9</scope>
    <scope>IDENTIFICATION IN THE RAGULATOR COMPLEX</scope>
</reference>
<reference evidence="54 55 56" key="42">
    <citation type="journal article" date="2023" name="Nature">
        <title>Structure of the lysosomal mTORC1-TFEB-Rag-Ragulator megacomplex.</title>
        <authorList>
            <person name="Cui Z."/>
            <person name="Napolitano G."/>
            <person name="de Araujo M.E.G."/>
            <person name="Esposito A."/>
            <person name="Monfregola J."/>
            <person name="Huber L.A."/>
            <person name="Ballabio A."/>
            <person name="Hurley J.H."/>
        </authorList>
    </citation>
    <scope>STRUCTURE BY ELECTRON MICROSCOPY (2.90 ANGSTROMS) IN COMPLEX WITH RRAGA; RRAGC; LAMTOR2; LAMTOR3; LAMTOR4; LAMTOR5; RPTOR; MLST8; MTOR AND TFEB</scope>
    <scope>IDENTIFICATION IN THE RAGULATOR COMPLEX</scope>
</reference>
<protein>
    <recommendedName>
        <fullName evidence="36">Ragulator complex protein LAMTOR1</fullName>
    </recommendedName>
    <alternativeName>
        <fullName>Late endosomal/lysosomal adaptor and MAPK and MTOR activator 1</fullName>
    </alternativeName>
    <alternativeName>
        <fullName evidence="34">Lipid raft adaptor protein p18</fullName>
    </alternativeName>
    <alternativeName>
        <fullName evidence="33">Protein associated with DRMs and endosomes</fullName>
    </alternativeName>
    <alternativeName>
        <fullName evidence="32">p27Kip1-releasing factor from RhoA</fullName>
        <shortName evidence="32">p27RF-Rho</shortName>
    </alternativeName>
</protein>
<keyword id="KW-0002">3D-structure</keyword>
<keyword id="KW-0903">Direct protein sequencing</keyword>
<keyword id="KW-0967">Endosome</keyword>
<keyword id="KW-1017">Isopeptide bond</keyword>
<keyword id="KW-0449">Lipoprotein</keyword>
<keyword id="KW-0458">Lysosome</keyword>
<keyword id="KW-0472">Membrane</keyword>
<keyword id="KW-0519">Myristate</keyword>
<keyword id="KW-0564">Palmitate</keyword>
<keyword id="KW-0597">Phosphoprotein</keyword>
<keyword id="KW-1267">Proteomics identification</keyword>
<keyword id="KW-1185">Reference proteome</keyword>
<keyword id="KW-0832">Ubl conjugation</keyword>
<feature type="initiator methionine" description="Removed" evidence="8 11 24 26">
    <location>
        <position position="1"/>
    </location>
</feature>
<feature type="chain" id="PRO_0000274292" description="Ragulator complex protein LAMTOR1">
    <location>
        <begin position="2"/>
        <end position="161"/>
    </location>
</feature>
<feature type="region of interest" description="Disordered" evidence="3">
    <location>
        <begin position="1"/>
        <end position="43"/>
    </location>
</feature>
<feature type="region of interest" description="Interaction with LAMTOR2 and LAMTOR3" evidence="1">
    <location>
        <begin position="121"/>
        <end position="161"/>
    </location>
</feature>
<feature type="modified residue" description="Phosphoserine" evidence="58 59">
    <location>
        <position position="27"/>
    </location>
</feature>
<feature type="modified residue" description="Phosphoserine" evidence="59">
    <location>
        <position position="42"/>
    </location>
</feature>
<feature type="modified residue" description="Phosphoserine" evidence="59">
    <location>
        <position position="56"/>
    </location>
</feature>
<feature type="modified residue" description="Phosphoserine" evidence="59">
    <location>
        <position position="98"/>
    </location>
</feature>
<feature type="modified residue" description="Phosphoserine" evidence="59">
    <location>
        <position position="141"/>
    </location>
</feature>
<feature type="lipid moiety-binding region" description="N-myristoyl glycine" evidence="8 11 24 26">
    <location>
        <position position="2"/>
    </location>
</feature>
<feature type="lipid moiety-binding region" description="S-palmitoyl cysteine" evidence="20 26 28">
    <location>
        <position position="3"/>
    </location>
</feature>
<feature type="lipid moiety-binding region" description="S-palmitoyl cysteine" evidence="20 26 28">
    <location>
        <position position="4"/>
    </location>
</feature>
<feature type="cross-link" description="Glycyl lysine isopeptide (Lys-Gly) (interchain with G-Cter in ubiquitin)" evidence="30">
    <location>
        <position position="20"/>
    </location>
</feature>
<feature type="cross-link" description="Glycyl lysine isopeptide (Lys-Gly) (interchain with G-Cter in ubiquitin)" evidence="30">
    <location>
        <position position="31"/>
    </location>
</feature>
<feature type="cross-link" description="Glycyl lysine isopeptide (Lys-Gly) (interchain with G-Cter in ubiquitin)" evidence="30">
    <location>
        <position position="60"/>
    </location>
</feature>
<feature type="cross-link" description="Glycyl lysine isopeptide (Lys-Gly) (interchain with G-Cter in ubiquitin)" evidence="2">
    <location>
        <position position="103"/>
    </location>
</feature>
<feature type="cross-link" description="Glycyl lysine isopeptide (Lys-Gly) (interchain with G-Cter in ubiquitin)" evidence="2">
    <location>
        <position position="104"/>
    </location>
</feature>
<feature type="sequence variant" id="VAR_030250" description="In dbSNP:rs1053443.">
    <original>S</original>
    <variation>L</variation>
    <location>
        <position position="73"/>
    </location>
</feature>
<feature type="mutagenesis site" description="Abolished N-myristoylation and subsequent palmitoylation." evidence="26">
    <original>G</original>
    <variation>A</variation>
    <location>
        <position position="2"/>
    </location>
</feature>
<feature type="mutagenesis site" description="Abolished palmitoylation and recruitment to lysosomes, leading to impaired activation of the mTORC1 complex." evidence="20 28">
    <original>CC</original>
    <variation>SS</variation>
    <location>
        <begin position="3"/>
        <end position="4"/>
    </location>
</feature>
<feature type="mutagenesis site" description="Decreased palmitoylation." evidence="26">
    <original>C</original>
    <variation>A</variation>
    <location>
        <position position="3"/>
    </location>
</feature>
<feature type="mutagenesis site" description="Does not affect interaction with ZDHHC3." evidence="28">
    <original>C</original>
    <variation>S</variation>
    <location>
        <position position="3"/>
    </location>
</feature>
<feature type="mutagenesis site" description="Decreased palmitoylation." evidence="26">
    <original>C</original>
    <variation>A</variation>
    <location>
        <position position="4"/>
    </location>
</feature>
<feature type="mutagenesis site" description="Does not affect interaction with ZDHHC3." evidence="28">
    <original>C</original>
    <variation>S</variation>
    <location>
        <position position="4"/>
    </location>
</feature>
<feature type="mutagenesis site" description="Impaired assembly of the Ragulator complex." evidence="14">
    <original>L</original>
    <variation>R</variation>
    <location>
        <position position="119"/>
    </location>
</feature>
<feature type="mutagenesis site" description="Impaired assembly of the Ragulator complex." evidence="14">
    <original>V</original>
    <variation>D</variation>
    <location>
        <position position="132"/>
    </location>
</feature>
<feature type="mutagenesis site" description="Impaired assembly of the Ragulator complex." evidence="12">
    <original>VD</original>
    <variation>AA</variation>
    <location>
        <begin position="148"/>
        <end position="149"/>
    </location>
</feature>
<feature type="mutagenesis site" description="Impaired recruiment of Rag GTPases (RRAGA and RRAGC) to the lysosomal membrane." evidence="12">
    <original>KEE</original>
    <variation>AAA</variation>
    <location>
        <begin position="151"/>
        <end position="153"/>
    </location>
</feature>
<feature type="mutagenesis site" description="Does not affect interaction with RRAGA and RRAGC in vitro." evidence="16">
    <original>LVVQF</original>
    <variation>DDDQD</variation>
    <location>
        <begin position="154"/>
        <end position="158"/>
    </location>
</feature>
<feature type="mutagenesis site" description="Impaired recruiment of Rag GTPases (RRAGA and RRAGC) to the lysosomal membrane." evidence="12">
    <original>LVV</original>
    <variation>AAA</variation>
    <location>
        <begin position="154"/>
        <end position="156"/>
    </location>
</feature>
<feature type="sequence conflict" description="In Ref. 2; CAG33528." evidence="36" ref="2">
    <original>E</original>
    <variation>V</variation>
    <location>
        <position position="50"/>
    </location>
</feature>
<feature type="sequence conflict" description="In Ref. 1; AAL55767." evidence="36" ref="1">
    <original>K</original>
    <variation>R</variation>
    <location>
        <position position="60"/>
    </location>
</feature>
<feature type="sequence conflict" description="In Ref. 2; CAG33528." evidence="36" ref="2">
    <original>S</original>
    <variation>P</variation>
    <location>
        <position position="69"/>
    </location>
</feature>
<feature type="helix" evidence="60">
    <location>
        <begin position="50"/>
        <end position="64"/>
    </location>
</feature>
<feature type="helix" evidence="63">
    <location>
        <begin position="68"/>
        <end position="70"/>
    </location>
</feature>
<feature type="turn" evidence="62">
    <location>
        <begin position="75"/>
        <end position="77"/>
    </location>
</feature>
<feature type="helix" evidence="60">
    <location>
        <begin position="78"/>
        <end position="95"/>
    </location>
</feature>
<feature type="helix" evidence="61">
    <location>
        <begin position="98"/>
        <end position="102"/>
    </location>
</feature>
<feature type="helix" evidence="61">
    <location>
        <begin position="115"/>
        <end position="120"/>
    </location>
</feature>
<feature type="helix" evidence="61">
    <location>
        <begin position="126"/>
        <end position="142"/>
    </location>
</feature>
<feature type="helix" evidence="61">
    <location>
        <begin position="143"/>
        <end position="145"/>
    </location>
</feature>
<feature type="strand" evidence="62">
    <location>
        <begin position="154"/>
        <end position="156"/>
    </location>
</feature>
<proteinExistence type="evidence at protein level"/>
<comment type="function">
    <text evidence="2 4 5 6 7 12 13 14 15 16 19 20 24 30">Key component of the Ragulator complex, a multiprotein complex involved in amino acid sensing and activation of mTORC1, a signaling complex promoting cell growth in response to growth factors, energy levels, and amino acids (PubMed:20381137, PubMed:22980980, PubMed:29158492). Activated by amino acids through a mechanism involving the lysosomal V-ATPase, the Ragulator plays a dual role for the small GTPases Rag (RagA/RRAGA, RagB/RRAGB, RagC/RRAGC and/or RagD/RRAGD): it (1) acts as a guanine nucleotide exchange factor (GEF), activating the small GTPases Rag and (2) mediates recruitment of Rag GTPases to the lysosome membrane (PubMed:22980980, PubMed:28935770, PubMed:29158492, PubMed:30181260, PubMed:31001086, PubMed:32686708, PubMed:36476874). Activated Ragulator and Rag GTPases function as a scaffold recruiting mTORC1 to lysosomes where it is in turn activated (PubMed:20381137, PubMed:22980980, PubMed:29158492). LAMTOR1 is directly responsible for anchoring the Ragulator complex to the lysosomal membrane (PubMed:31001086, PubMed:32686708). LAMTOR1 wraps around the other subunits of the Ragulator complex to hold them in place and interacts with the Rag GTPases, thereby playing a key role in the recruitment of the mTORC1 complex to lysosomes (PubMed:28935770, PubMed:29107538, PubMed:29123114, PubMed:29285400). Also involved in the control of embryonic stem cells differentiation via non-canonical RagC/RRAGC and RagD/RRAGD activation: together with FLCN, it is necessary to recruit and activate RagC/RRAGC and RagD/RRAGD at the lysosomes, and to induce exit of embryonic stem cells from pluripotency via non-canonical, mTOR-independent TFE3 inactivation (By similarity). Also required for late endosomes/lysosomes biogenesis it may regulate both the recycling of receptors through endosomes and the MAPK signaling pathway through recruitment of some of its components to late endosomes (PubMed:20381137, PubMed:22980980). May be involved in cholesterol homeostasis regulating LDL uptake and cholesterol release from late endosomes/lysosomes (PubMed:20544018). May also play a role in RHOA activation (PubMed:19654316).</text>
</comment>
<comment type="subunit">
    <text evidence="4 5 7 9 10 12 13 14 15 16 17 21 22 23 25 27 29 30 31">Part of the Ragulator complex composed of LAMTOR1, LAMTOR2, LAMTOR3, LAMTOR4 and LAMTOR5 (PubMed:20381137, PubMed:22980980, PubMed:28935770, PubMed:29107538, PubMed:29123114, PubMed:29158492, PubMed:29285400, PubMed:31601708, PubMed:32868926, PubMed:35338845, PubMed:36103527, PubMed:36697823). LAMTOR4 and LAMTOR5 form a heterodimer that interacts, through LAMTOR1, with a LAMTOR2, LAMTOR3 heterodimer (PubMed:20381137, PubMed:22980980). Interacts with LAMTOR2 and LAMTOR3; the interaction is direct (PubMed:20381137, PubMed:22980980). The Ragulator complex interacts with both the mTORC1 complex and heterodimers constituted of the Rag GTPases RagA/RRAGA, RagB/RRAGB, RagC/RRAGC and RagD/RRAGD; regulated by amino acid availability (PubMed:20381137, PubMed:22980980, PubMed:32868926). The Ragulator complex interacts with SLC38A9; the probable amino acid sensor (PubMed:22980980, PubMed:25561175, PubMed:25567906). Component of the lysosomal folliculin complex (LFC), composed of FLCN, FNIP1 (or FNIP2), RagA/RRAGA or RagB/RRAGB GDP-bound, RagC/RRAGC or RagD/RRAGD GTP-bound, and Ragulator (PubMed:31672913, PubMed:31704029). Associates with the lysosomal V-ATPase complex; interaction promotes the guanine nucleotide exchange factor (GEF) of the Ragulator complex (PubMed:36476874). Interacts with MMP14 (PubMed:19654316). Interacts with CDKN1B; prevents the interaction of CDKN1B with RHOA leaving RHOA in a form accessible to activation by ARHGEF2 (PubMed:19654316). Interacts with PIP4P1 (PubMed:29644770).</text>
</comment>
<comment type="interaction">
    <interactant intactId="EBI-715385">
        <id>Q6IAA8</id>
    </interactant>
    <interactant intactId="EBI-25837549">
        <id>P28329-3</id>
        <label>CHAT</label>
    </interactant>
    <organismsDiffer>false</organismsDiffer>
    <experiments>3</experiments>
</comment>
<comment type="interaction">
    <interactant intactId="EBI-715385">
        <id>Q6IAA8</id>
    </interactant>
    <interactant intactId="EBI-1188472">
        <id>P78358</id>
        <label>CTAG1B</label>
    </interactant>
    <organismsDiffer>false</organismsDiffer>
    <experiments>3</experiments>
</comment>
<comment type="interaction">
    <interactant intactId="EBI-715385">
        <id>Q6IAA8</id>
    </interactant>
    <interactant intactId="EBI-348399">
        <id>P22607</id>
        <label>FGFR3</label>
    </interactant>
    <organismsDiffer>false</organismsDiffer>
    <experiments>3</experiments>
</comment>
<comment type="interaction">
    <interactant intactId="EBI-715385">
        <id>Q6IAA8</id>
    </interactant>
    <interactant intactId="EBI-351506">
        <id>P06396</id>
        <label>GSN</label>
    </interactant>
    <organismsDiffer>false</organismsDiffer>
    <experiments>3</experiments>
</comment>
<comment type="interaction">
    <interactant intactId="EBI-715385">
        <id>Q6IAA8</id>
    </interactant>
    <interactant intactId="EBI-2643704">
        <id>Q9Y2Q5</id>
        <label>LAMTOR2</label>
    </interactant>
    <organismsDiffer>false</organismsDiffer>
    <experiments>23</experiments>
</comment>
<comment type="interaction">
    <interactant intactId="EBI-715385">
        <id>Q6IAA8</id>
    </interactant>
    <interactant intactId="EBI-1038192">
        <id>Q9UHA4</id>
        <label>LAMTOR3</label>
    </interactant>
    <organismsDiffer>false</organismsDiffer>
    <experiments>17</experiments>
</comment>
<comment type="interaction">
    <interactant intactId="EBI-715385">
        <id>Q6IAA8</id>
    </interactant>
    <interactant intactId="EBI-5658976">
        <id>Q0VGL1</id>
        <label>LAMTOR4</label>
    </interactant>
    <organismsDiffer>false</organismsDiffer>
    <experiments>13</experiments>
</comment>
<comment type="interaction">
    <interactant intactId="EBI-715385">
        <id>Q6IAA8</id>
    </interactant>
    <interactant intactId="EBI-716404">
        <id>P16284</id>
        <label>PECAM1</label>
    </interactant>
    <organismsDiffer>false</organismsDiffer>
    <experiments>3</experiments>
</comment>
<comment type="interaction">
    <interactant intactId="EBI-715385">
        <id>Q6IAA8</id>
    </interactant>
    <interactant intactId="EBI-399437">
        <id>P20339</id>
        <label>RAB5A</label>
    </interactant>
    <organismsDiffer>false</organismsDiffer>
    <experiments>3</experiments>
</comment>
<comment type="interaction">
    <interactant intactId="EBI-715385">
        <id>Q6IAA8</id>
    </interactant>
    <interactant intactId="EBI-752376">
        <id>Q7L523</id>
        <label>RRAGA</label>
    </interactant>
    <organismsDiffer>false</organismsDiffer>
    <experiments>15</experiments>
</comment>
<comment type="interaction">
    <interactant intactId="EBI-715385">
        <id>Q6IAA8</id>
    </interactant>
    <interactant intactId="EBI-752390">
        <id>Q9HB90</id>
        <label>RRAGC</label>
    </interactant>
    <organismsDiffer>false</organismsDiffer>
    <experiments>21</experiments>
</comment>
<comment type="interaction">
    <interactant intactId="EBI-715385">
        <id>Q6IAA8</id>
    </interactant>
    <interactant intactId="EBI-9978316">
        <id>Q8NBW4</id>
        <label>SLC38A9</label>
    </interactant>
    <organismsDiffer>false</organismsDiffer>
    <experiments>15</experiments>
</comment>
<comment type="interaction">
    <interactant intactId="EBI-715385">
        <id>Q6IAA8</id>
    </interactant>
    <interactant intactId="EBI-473850">
        <id>P61086</id>
        <label>UBE2K</label>
    </interactant>
    <organismsDiffer>false</organismsDiffer>
    <experiments>3</experiments>
</comment>
<comment type="interaction">
    <interactant intactId="EBI-715385">
        <id>Q6IAA8</id>
    </interactant>
    <interactant intactId="EBI-741480">
        <id>Q9UMX0</id>
        <label>UBQLN1</label>
    </interactant>
    <organismsDiffer>false</organismsDiffer>
    <experiments>3</experiments>
</comment>
<comment type="interaction">
    <interactant intactId="EBI-715385">
        <id>Q6IAA8</id>
    </interactant>
    <interactant intactId="EBI-353844">
        <id>P08670</id>
        <label>VIM</label>
    </interactant>
    <organismsDiffer>false</organismsDiffer>
    <experiments>3</experiments>
</comment>
<comment type="interaction">
    <interactant intactId="EBI-715385">
        <id>Q6IAA8</id>
    </interactant>
    <interactant intactId="EBI-25900580">
        <id>Q9Y649</id>
    </interactant>
    <organismsDiffer>false</organismsDiffer>
    <experiments>3</experiments>
</comment>
<comment type="subcellular location">
    <subcellularLocation>
        <location evidence="6 15 24">Lysosome membrane</location>
        <topology evidence="20">Lipid-anchor</topology>
        <orientation evidence="20">Cytoplasmic side</orientation>
    </subcellularLocation>
    <subcellularLocation>
        <location evidence="6">Late endosome membrane</location>
        <topology evidence="20">Lipid-anchor</topology>
        <orientation evidence="20">Cytoplasmic side</orientation>
    </subcellularLocation>
    <text evidence="20">Recruited to lysosome and endosome membranes through N-terminal myristoylation and palmitoylation.</text>
</comment>
<comment type="induction">
    <text evidence="6">Down-regulated by cholesterol (at protein level).</text>
</comment>
<comment type="PTM">
    <text evidence="20 26 28">N-terminal myristoylation and palmitoylation mediates its recruitment to lysosome membranes, thereby promoting localization of the Ragulator complex to lysosomes (PubMed:31001086). N-myristoylation by NMT1 is required for palmitoylation at Cys-3 and Cys-4 (PubMed:34999170). May be palmitoylated by ZDHHC3 (PubMed:35893977).</text>
</comment>
<comment type="PTM">
    <text evidence="18 30">Ubiquitinated at Lys-60, Lys-103 and Lys-104 by UBE3A, promoting its degradation by the proteasome (PubMed:30020076). Ubiquitination at Lys-20 impairs the association with the lysosomal V-ATPase complex (PubMed:36476874). Deubiquitination at Lys-20 by USP32 promotes the association with the lysosomal V-ATPase complex and subsequent activation of the mTORC1 complex (PubMed:36476874).</text>
</comment>
<comment type="similarity">
    <text evidence="36">Belongs to the LAMTOR1 family.</text>
</comment>
<name>LTOR1_HUMAN</name>
<accession>Q6IAA8</accession>
<accession>Q8WZ09</accession>
<accession>Q9NWT0</accession>
<sequence length="161" mass="17745">MGCCYSSENEDSDQDREERKLLLDPSSPPTKALNGAEPNYHSLPSARTDEQALLSSILAKTASNIIDVSAADSQGMEQHEYMDRARQYSTRLAVLSSSLTHWKKLPPLPSLTSQPHQVLASEPIPFSDLQQVSRIAAYAYSALSQIRVDAKEELVVQFGIP</sequence>
<dbReference type="EMBL" id="AF289583">
    <property type="protein sequence ID" value="AAL55767.1"/>
    <property type="molecule type" value="mRNA"/>
</dbReference>
<dbReference type="EMBL" id="CR457247">
    <property type="protein sequence ID" value="CAG33528.1"/>
    <property type="molecule type" value="mRNA"/>
</dbReference>
<dbReference type="EMBL" id="AK000632">
    <property type="protein sequence ID" value="BAA91297.1"/>
    <property type="molecule type" value="mRNA"/>
</dbReference>
<dbReference type="EMBL" id="BC001706">
    <property type="protein sequence ID" value="AAH01706.1"/>
    <property type="molecule type" value="mRNA"/>
</dbReference>
<dbReference type="CCDS" id="CCDS8209.1"/>
<dbReference type="RefSeq" id="NP_060377.1">
    <property type="nucleotide sequence ID" value="NM_017907.3"/>
</dbReference>
<dbReference type="PDB" id="5X6U">
    <property type="method" value="X-ray"/>
    <property type="resolution" value="2.40 A"/>
    <property type="chains" value="E=42-161"/>
</dbReference>
<dbReference type="PDB" id="5X6V">
    <property type="method" value="X-ray"/>
    <property type="resolution" value="2.02 A"/>
    <property type="chains" value="E=42-161"/>
</dbReference>
<dbReference type="PDB" id="5Y39">
    <property type="method" value="X-ray"/>
    <property type="resolution" value="2.65 A"/>
    <property type="chains" value="A/F=76-145"/>
</dbReference>
<dbReference type="PDB" id="5Y3A">
    <property type="method" value="X-ray"/>
    <property type="resolution" value="2.90 A"/>
    <property type="chains" value="A/F=50-161"/>
</dbReference>
<dbReference type="PDB" id="5YK3">
    <property type="method" value="X-ray"/>
    <property type="resolution" value="3.01 A"/>
    <property type="chains" value="A/F/K=77-160"/>
</dbReference>
<dbReference type="PDB" id="6B9X">
    <property type="method" value="X-ray"/>
    <property type="resolution" value="1.42 A"/>
    <property type="chains" value="A=1-161"/>
</dbReference>
<dbReference type="PDB" id="6EHP">
    <property type="method" value="X-ray"/>
    <property type="resolution" value="2.30 A"/>
    <property type="chains" value="E=21-161"/>
</dbReference>
<dbReference type="PDB" id="6EHR">
    <property type="method" value="X-ray"/>
    <property type="resolution" value="2.90 A"/>
    <property type="chains" value="E=21-161"/>
</dbReference>
<dbReference type="PDB" id="6NZD">
    <property type="method" value="EM"/>
    <property type="resolution" value="3.60 A"/>
    <property type="chains" value="A=5-161"/>
</dbReference>
<dbReference type="PDB" id="6U62">
    <property type="method" value="EM"/>
    <property type="resolution" value="3.18 A"/>
    <property type="chains" value="D=6-161"/>
</dbReference>
<dbReference type="PDB" id="6ULG">
    <property type="method" value="EM"/>
    <property type="resolution" value="3.31 A"/>
    <property type="chains" value="E=1-161"/>
</dbReference>
<dbReference type="PDB" id="6WJ2">
    <property type="method" value="EM"/>
    <property type="resolution" value="3.20 A"/>
    <property type="chains" value="A=1-161"/>
</dbReference>
<dbReference type="PDB" id="6WJ3">
    <property type="method" value="EM"/>
    <property type="resolution" value="3.90 A"/>
    <property type="chains" value="A=1-161"/>
</dbReference>
<dbReference type="PDB" id="7T3A">
    <property type="method" value="EM"/>
    <property type="resolution" value="4.00 A"/>
    <property type="chains" value="M=1-161"/>
</dbReference>
<dbReference type="PDB" id="7T3B">
    <property type="method" value="EM"/>
    <property type="resolution" value="3.90 A"/>
    <property type="chains" value="F=1-161"/>
</dbReference>
<dbReference type="PDB" id="7T3C">
    <property type="method" value="EM"/>
    <property type="resolution" value="4.00 A"/>
    <property type="chains" value="F/M=1-161"/>
</dbReference>
<dbReference type="PDB" id="7UX2">
    <property type="method" value="EM"/>
    <property type="resolution" value="2.90 A"/>
    <property type="chains" value="D/K=1-161"/>
</dbReference>
<dbReference type="PDB" id="7UXC">
    <property type="method" value="EM"/>
    <property type="resolution" value="3.20 A"/>
    <property type="chains" value="F/M=1-161"/>
</dbReference>
<dbReference type="PDB" id="7UXH">
    <property type="method" value="EM"/>
    <property type="resolution" value="3.20 A"/>
    <property type="chains" value="H/O/X/e=1-161"/>
</dbReference>
<dbReference type="PDB" id="8DHB">
    <property type="method" value="EM"/>
    <property type="resolution" value="3.53 A"/>
    <property type="chains" value="C=1-161"/>
</dbReference>
<dbReference type="PDBsum" id="5X6U"/>
<dbReference type="PDBsum" id="5X6V"/>
<dbReference type="PDBsum" id="5Y39"/>
<dbReference type="PDBsum" id="5Y3A"/>
<dbReference type="PDBsum" id="5YK3"/>
<dbReference type="PDBsum" id="6B9X"/>
<dbReference type="PDBsum" id="6EHP"/>
<dbReference type="PDBsum" id="6EHR"/>
<dbReference type="PDBsum" id="6NZD"/>
<dbReference type="PDBsum" id="6U62"/>
<dbReference type="PDBsum" id="6ULG"/>
<dbReference type="PDBsum" id="6WJ2"/>
<dbReference type="PDBsum" id="6WJ3"/>
<dbReference type="PDBsum" id="7T3A"/>
<dbReference type="PDBsum" id="7T3B"/>
<dbReference type="PDBsum" id="7T3C"/>
<dbReference type="PDBsum" id="7UX2"/>
<dbReference type="PDBsum" id="7UXC"/>
<dbReference type="PDBsum" id="7UXH"/>
<dbReference type="PDBsum" id="8DHB"/>
<dbReference type="EMDB" id="EMD-0554"/>
<dbReference type="EMDB" id="EMD-20660"/>
<dbReference type="EMDB" id="EMD-20814"/>
<dbReference type="EMDB" id="EMD-21686"/>
<dbReference type="EMDB" id="EMD-21687"/>
<dbReference type="EMDB" id="EMD-25652"/>
<dbReference type="EMDB" id="EMD-25653"/>
<dbReference type="EMDB" id="EMD-25654"/>
<dbReference type="EMDB" id="EMD-26846"/>
<dbReference type="EMDB" id="EMD-26857"/>
<dbReference type="EMDB" id="EMD-26861"/>
<dbReference type="EMDB" id="EMD-27435"/>
<dbReference type="SMR" id="Q6IAA8"/>
<dbReference type="BioGRID" id="120336">
    <property type="interactions" value="738"/>
</dbReference>
<dbReference type="ComplexPortal" id="CPX-4741">
    <property type="entry name" value="Ragulator complex"/>
</dbReference>
<dbReference type="CORUM" id="Q6IAA8"/>
<dbReference type="DIP" id="DIP-39650N"/>
<dbReference type="FunCoup" id="Q6IAA8">
    <property type="interactions" value="1565"/>
</dbReference>
<dbReference type="IntAct" id="Q6IAA8">
    <property type="interactions" value="110"/>
</dbReference>
<dbReference type="MINT" id="Q6IAA8"/>
<dbReference type="STRING" id="9606.ENSP00000278671"/>
<dbReference type="GlyGen" id="Q6IAA8">
    <property type="glycosylation" value="1 site, 1 O-linked glycan (1 site)"/>
</dbReference>
<dbReference type="iPTMnet" id="Q6IAA8"/>
<dbReference type="PhosphoSitePlus" id="Q6IAA8"/>
<dbReference type="SwissPalm" id="Q6IAA8"/>
<dbReference type="BioMuta" id="LAMTOR1"/>
<dbReference type="DMDM" id="125863645"/>
<dbReference type="jPOST" id="Q6IAA8"/>
<dbReference type="MassIVE" id="Q6IAA8"/>
<dbReference type="PaxDb" id="9606-ENSP00000278671"/>
<dbReference type="PeptideAtlas" id="Q6IAA8"/>
<dbReference type="ProteomicsDB" id="66364"/>
<dbReference type="Pumba" id="Q6IAA8"/>
<dbReference type="TopDownProteomics" id="Q6IAA8"/>
<dbReference type="Antibodypedia" id="721">
    <property type="antibodies" value="82 antibodies from 25 providers"/>
</dbReference>
<dbReference type="DNASU" id="55004"/>
<dbReference type="Ensembl" id="ENST00000278671.10">
    <property type="protein sequence ID" value="ENSP00000278671.5"/>
    <property type="gene ID" value="ENSG00000149357.10"/>
</dbReference>
<dbReference type="GeneID" id="55004"/>
<dbReference type="KEGG" id="hsa:55004"/>
<dbReference type="MANE-Select" id="ENST00000278671.10">
    <property type="protein sequence ID" value="ENSP00000278671.5"/>
    <property type="RefSeq nucleotide sequence ID" value="NM_017907.3"/>
    <property type="RefSeq protein sequence ID" value="NP_060377.1"/>
</dbReference>
<dbReference type="UCSC" id="uc001ort.3">
    <property type="organism name" value="human"/>
</dbReference>
<dbReference type="AGR" id="HGNC:26068"/>
<dbReference type="CTD" id="55004"/>
<dbReference type="DisGeNET" id="55004"/>
<dbReference type="GeneCards" id="LAMTOR1"/>
<dbReference type="HGNC" id="HGNC:26068">
    <property type="gene designation" value="LAMTOR1"/>
</dbReference>
<dbReference type="HPA" id="ENSG00000149357">
    <property type="expression patterns" value="Low tissue specificity"/>
</dbReference>
<dbReference type="MIM" id="613510">
    <property type="type" value="gene"/>
</dbReference>
<dbReference type="neXtProt" id="NX_Q6IAA8"/>
<dbReference type="OpenTargets" id="ENSG00000149357"/>
<dbReference type="PharmGKB" id="PA143485354"/>
<dbReference type="VEuPathDB" id="HostDB:ENSG00000149357"/>
<dbReference type="eggNOG" id="ENOG502RYX2">
    <property type="taxonomic scope" value="Eukaryota"/>
</dbReference>
<dbReference type="GeneTree" id="ENSGT00390000016789"/>
<dbReference type="HOGENOM" id="CLU_136283_1_0_1"/>
<dbReference type="InParanoid" id="Q6IAA8"/>
<dbReference type="OMA" id="MGCCYSF"/>
<dbReference type="OrthoDB" id="5562028at2759"/>
<dbReference type="PAN-GO" id="Q6IAA8">
    <property type="GO annotations" value="8 GO annotations based on evolutionary models"/>
</dbReference>
<dbReference type="PhylomeDB" id="Q6IAA8"/>
<dbReference type="TreeFam" id="TF323788"/>
<dbReference type="PathwayCommons" id="Q6IAA8"/>
<dbReference type="Reactome" id="R-HSA-1632852">
    <property type="pathway name" value="Macroautophagy"/>
</dbReference>
<dbReference type="Reactome" id="R-HSA-165159">
    <property type="pathway name" value="MTOR signalling"/>
</dbReference>
<dbReference type="Reactome" id="R-HSA-166208">
    <property type="pathway name" value="mTORC1-mediated signalling"/>
</dbReference>
<dbReference type="Reactome" id="R-HSA-380972">
    <property type="pathway name" value="Energy dependent regulation of mTOR by LKB1-AMPK"/>
</dbReference>
<dbReference type="Reactome" id="R-HSA-5628897">
    <property type="pathway name" value="TP53 Regulates Metabolic Genes"/>
</dbReference>
<dbReference type="Reactome" id="R-HSA-6798695">
    <property type="pathway name" value="Neutrophil degranulation"/>
</dbReference>
<dbReference type="Reactome" id="R-HSA-8943724">
    <property type="pathway name" value="Regulation of PTEN gene transcription"/>
</dbReference>
<dbReference type="Reactome" id="R-HSA-9013148">
    <property type="pathway name" value="CDC42 GTPase cycle"/>
</dbReference>
<dbReference type="Reactome" id="R-HSA-9013149">
    <property type="pathway name" value="RAC1 GTPase cycle"/>
</dbReference>
<dbReference type="Reactome" id="R-HSA-9013404">
    <property type="pathway name" value="RAC2 GTPase cycle"/>
</dbReference>
<dbReference type="Reactome" id="R-HSA-9013406">
    <property type="pathway name" value="RHOQ GTPase cycle"/>
</dbReference>
<dbReference type="Reactome" id="R-HSA-9013407">
    <property type="pathway name" value="RHOH GTPase cycle"/>
</dbReference>
<dbReference type="Reactome" id="R-HSA-9013408">
    <property type="pathway name" value="RHOG GTPase cycle"/>
</dbReference>
<dbReference type="Reactome" id="R-HSA-9013409">
    <property type="pathway name" value="RHOJ GTPase cycle"/>
</dbReference>
<dbReference type="Reactome" id="R-HSA-9013423">
    <property type="pathway name" value="RAC3 GTPase cycle"/>
</dbReference>
<dbReference type="Reactome" id="R-HSA-9639288">
    <property type="pathway name" value="Amino acids regulate mTORC1"/>
</dbReference>
<dbReference type="SignaLink" id="Q6IAA8"/>
<dbReference type="SIGNOR" id="Q6IAA8"/>
<dbReference type="BioGRID-ORCS" id="55004">
    <property type="hits" value="141 hits in 1165 CRISPR screens"/>
</dbReference>
<dbReference type="CD-CODE" id="FB4E32DD">
    <property type="entry name" value="Presynaptic clusters and postsynaptic densities"/>
</dbReference>
<dbReference type="ChiTaRS" id="LAMTOR1">
    <property type="organism name" value="human"/>
</dbReference>
<dbReference type="GenomeRNAi" id="55004"/>
<dbReference type="Pharos" id="Q6IAA8">
    <property type="development level" value="Tbio"/>
</dbReference>
<dbReference type="PRO" id="PR:Q6IAA8"/>
<dbReference type="Proteomes" id="UP000005640">
    <property type="component" value="Chromosome 11"/>
</dbReference>
<dbReference type="RNAct" id="Q6IAA8">
    <property type="molecule type" value="protein"/>
</dbReference>
<dbReference type="Bgee" id="ENSG00000149357">
    <property type="expression patterns" value="Expressed in monocyte and 181 other cell types or tissues"/>
</dbReference>
<dbReference type="ExpressionAtlas" id="Q6IAA8">
    <property type="expression patterns" value="baseline and differential"/>
</dbReference>
<dbReference type="GO" id="GO:0035577">
    <property type="term" value="C:azurophil granule membrane"/>
    <property type="evidence" value="ECO:0000304"/>
    <property type="project" value="Reactome"/>
</dbReference>
<dbReference type="GO" id="GO:0070062">
    <property type="term" value="C:extracellular exosome"/>
    <property type="evidence" value="ECO:0007005"/>
    <property type="project" value="UniProtKB"/>
</dbReference>
<dbReference type="GO" id="GO:0101003">
    <property type="term" value="C:ficolin-1-rich granule membrane"/>
    <property type="evidence" value="ECO:0000304"/>
    <property type="project" value="Reactome"/>
</dbReference>
<dbReference type="GO" id="GO:1990877">
    <property type="term" value="C:FNIP-folliculin RagC/D GAP"/>
    <property type="evidence" value="ECO:0000314"/>
    <property type="project" value="UniProtKB"/>
</dbReference>
<dbReference type="GO" id="GO:0031902">
    <property type="term" value="C:late endosome membrane"/>
    <property type="evidence" value="ECO:0000250"/>
    <property type="project" value="UniProtKB"/>
</dbReference>
<dbReference type="GO" id="GO:0005765">
    <property type="term" value="C:lysosomal membrane"/>
    <property type="evidence" value="ECO:0000314"/>
    <property type="project" value="UniProtKB"/>
</dbReference>
<dbReference type="GO" id="GO:0005764">
    <property type="term" value="C:lysosome"/>
    <property type="evidence" value="ECO:0000314"/>
    <property type="project" value="UniProtKB"/>
</dbReference>
<dbReference type="GO" id="GO:0045121">
    <property type="term" value="C:membrane raft"/>
    <property type="evidence" value="ECO:0000250"/>
    <property type="project" value="UniProtKB"/>
</dbReference>
<dbReference type="GO" id="GO:0005886">
    <property type="term" value="C:plasma membrane"/>
    <property type="evidence" value="ECO:0000304"/>
    <property type="project" value="Reactome"/>
</dbReference>
<dbReference type="GO" id="GO:0071986">
    <property type="term" value="C:Ragulator complex"/>
    <property type="evidence" value="ECO:0000314"/>
    <property type="project" value="UniProtKB"/>
</dbReference>
<dbReference type="GO" id="GO:0035579">
    <property type="term" value="C:specific granule membrane"/>
    <property type="evidence" value="ECO:0000304"/>
    <property type="project" value="Reactome"/>
</dbReference>
<dbReference type="GO" id="GO:0051020">
    <property type="term" value="F:GTPase binding"/>
    <property type="evidence" value="ECO:0000353"/>
    <property type="project" value="CAFA"/>
</dbReference>
<dbReference type="GO" id="GO:0043495">
    <property type="term" value="F:protein-membrane adaptor activity"/>
    <property type="evidence" value="ECO:0000314"/>
    <property type="project" value="UniProtKB"/>
</dbReference>
<dbReference type="GO" id="GO:0071230">
    <property type="term" value="P:cellular response to amino acid stimulus"/>
    <property type="evidence" value="ECO:0000314"/>
    <property type="project" value="ComplexPortal"/>
</dbReference>
<dbReference type="GO" id="GO:0031669">
    <property type="term" value="P:cellular response to nutrient levels"/>
    <property type="evidence" value="ECO:0000314"/>
    <property type="project" value="UniProt"/>
</dbReference>
<dbReference type="GO" id="GO:0042632">
    <property type="term" value="P:cholesterol homeostasis"/>
    <property type="evidence" value="ECO:0000315"/>
    <property type="project" value="UniProtKB"/>
</dbReference>
<dbReference type="GO" id="GO:0016197">
    <property type="term" value="P:endosomal transport"/>
    <property type="evidence" value="ECO:0000250"/>
    <property type="project" value="UniProtKB"/>
</dbReference>
<dbReference type="GO" id="GO:0007032">
    <property type="term" value="P:endosome organization"/>
    <property type="evidence" value="ECO:0000250"/>
    <property type="project" value="UniProtKB"/>
</dbReference>
<dbReference type="GO" id="GO:0032418">
    <property type="term" value="P:lysosome localization"/>
    <property type="evidence" value="ECO:0000250"/>
    <property type="project" value="UniProtKB"/>
</dbReference>
<dbReference type="GO" id="GO:0007040">
    <property type="term" value="P:lysosome organization"/>
    <property type="evidence" value="ECO:0000250"/>
    <property type="project" value="UniProtKB"/>
</dbReference>
<dbReference type="GO" id="GO:0043410">
    <property type="term" value="P:positive regulation of MAPK cascade"/>
    <property type="evidence" value="ECO:0000250"/>
    <property type="project" value="UniProtKB"/>
</dbReference>
<dbReference type="GO" id="GO:0150032">
    <property type="term" value="P:positive regulation of protein localization to lysosome"/>
    <property type="evidence" value="ECO:0000314"/>
    <property type="project" value="UniProt"/>
</dbReference>
<dbReference type="GO" id="GO:0032008">
    <property type="term" value="P:positive regulation of TOR signaling"/>
    <property type="evidence" value="ECO:0000315"/>
    <property type="project" value="UniProtKB"/>
</dbReference>
<dbReference type="GO" id="GO:1904263">
    <property type="term" value="P:positive regulation of TORC1 signaling"/>
    <property type="evidence" value="ECO:0000314"/>
    <property type="project" value="UniProtKB"/>
</dbReference>
<dbReference type="GO" id="GO:0008104">
    <property type="term" value="P:protein localization"/>
    <property type="evidence" value="ECO:0000315"/>
    <property type="project" value="UniProtKB"/>
</dbReference>
<dbReference type="GO" id="GO:0072657">
    <property type="term" value="P:protein localization to membrane"/>
    <property type="evidence" value="ECO:0000314"/>
    <property type="project" value="UniProtKB"/>
</dbReference>
<dbReference type="GO" id="GO:0001558">
    <property type="term" value="P:regulation of cell growth"/>
    <property type="evidence" value="ECO:0000315"/>
    <property type="project" value="UniProtKB"/>
</dbReference>
<dbReference type="GO" id="GO:0010874">
    <property type="term" value="P:regulation of cholesterol efflux"/>
    <property type="evidence" value="ECO:0000315"/>
    <property type="project" value="UniProtKB"/>
</dbReference>
<dbReference type="GO" id="GO:0060620">
    <property type="term" value="P:regulation of cholesterol import"/>
    <property type="evidence" value="ECO:0000315"/>
    <property type="project" value="UniProtKB"/>
</dbReference>
<dbReference type="GO" id="GO:0001919">
    <property type="term" value="P:regulation of receptor recycling"/>
    <property type="evidence" value="ECO:0000250"/>
    <property type="project" value="UniProtKB"/>
</dbReference>
<dbReference type="GO" id="GO:0038202">
    <property type="term" value="P:TORC1 signaling"/>
    <property type="evidence" value="ECO:0000303"/>
    <property type="project" value="ComplexPortal"/>
</dbReference>
<dbReference type="InterPro" id="IPR028209">
    <property type="entry name" value="LAMTOR1/MEH1"/>
</dbReference>
<dbReference type="PANTHER" id="PTHR13401">
    <property type="entry name" value="RAGULATOR COMPLEX PROTEIN LAMTOR1"/>
    <property type="match status" value="1"/>
</dbReference>
<dbReference type="PANTHER" id="PTHR13401:SF2">
    <property type="entry name" value="RAGULATOR COMPLEX PROTEIN LAMTOR1"/>
    <property type="match status" value="1"/>
</dbReference>
<dbReference type="Pfam" id="PF15454">
    <property type="entry name" value="LAMTOR"/>
    <property type="match status" value="1"/>
</dbReference>
<dbReference type="SMART" id="SM01262">
    <property type="entry name" value="LAMTOR"/>
    <property type="match status" value="1"/>
</dbReference>
<gene>
    <name evidence="35 37" type="primary">LAMTOR1</name>
    <name evidence="37" type="synonym">C11orf59</name>
    <name evidence="33" type="synonym">PDRO</name>
    <name type="ORF">PP7157</name>
</gene>